<reference key="1">
    <citation type="journal article" date="2006" name="Genome Res.">
        <title>Massive genome erosion and functional adaptations provide insights into the symbiotic lifestyle of Sodalis glossinidius in the tsetse host.</title>
        <authorList>
            <person name="Toh H."/>
            <person name="Weiss B.L."/>
            <person name="Perkin S.A.H."/>
            <person name="Yamashita A."/>
            <person name="Oshima K."/>
            <person name="Hattori M."/>
            <person name="Aksoy S."/>
        </authorList>
    </citation>
    <scope>NUCLEOTIDE SEQUENCE [LARGE SCALE GENOMIC DNA]</scope>
    <source>
        <strain>morsitans</strain>
    </source>
</reference>
<organism>
    <name type="scientific">Sodalis glossinidius (strain morsitans)</name>
    <dbReference type="NCBI Taxonomy" id="343509"/>
    <lineage>
        <taxon>Bacteria</taxon>
        <taxon>Pseudomonadati</taxon>
        <taxon>Pseudomonadota</taxon>
        <taxon>Gammaproteobacteria</taxon>
        <taxon>Enterobacterales</taxon>
        <taxon>Bruguierivoracaceae</taxon>
        <taxon>Sodalis</taxon>
    </lineage>
</organism>
<proteinExistence type="inferred from homology"/>
<sequence length="101" mass="11082">MAKGQSLQDPFLNALRRERVPVSIYLVNGIKLQGQIESFDQFVILLKNTVSQMVYKHAISTVVPSRPVSHHNNNPSGGSSNYHHGSTPASQPSQPESDDAE</sequence>
<protein>
    <recommendedName>
        <fullName evidence="1">RNA-binding protein Hfq</fullName>
    </recommendedName>
</protein>
<feature type="chain" id="PRO_0000265196" description="RNA-binding protein Hfq">
    <location>
        <begin position="1"/>
        <end position="101"/>
    </location>
</feature>
<feature type="domain" description="Sm" evidence="2">
    <location>
        <begin position="9"/>
        <end position="68"/>
    </location>
</feature>
<feature type="region of interest" description="Disordered" evidence="3">
    <location>
        <begin position="63"/>
        <end position="101"/>
    </location>
</feature>
<feature type="compositionally biased region" description="Low complexity" evidence="3">
    <location>
        <begin position="70"/>
        <end position="86"/>
    </location>
</feature>
<keyword id="KW-0694">RNA-binding</keyword>
<keyword id="KW-0346">Stress response</keyword>
<name>HFQ_SODGM</name>
<evidence type="ECO:0000255" key="1">
    <source>
        <dbReference type="HAMAP-Rule" id="MF_00436"/>
    </source>
</evidence>
<evidence type="ECO:0000255" key="2">
    <source>
        <dbReference type="PROSITE-ProRule" id="PRU01346"/>
    </source>
</evidence>
<evidence type="ECO:0000256" key="3">
    <source>
        <dbReference type="SAM" id="MobiDB-lite"/>
    </source>
</evidence>
<comment type="function">
    <text evidence="1">RNA chaperone that binds small regulatory RNA (sRNAs) and mRNAs to facilitate mRNA translational regulation in response to envelope stress, environmental stress and changes in metabolite concentrations. Also binds with high specificity to tRNAs.</text>
</comment>
<comment type="subunit">
    <text evidence="1">Homohexamer.</text>
</comment>
<comment type="similarity">
    <text evidence="1">Belongs to the Hfq family.</text>
</comment>
<accession>Q2NW63</accession>
<dbReference type="EMBL" id="AP008232">
    <property type="protein sequence ID" value="BAE73612.1"/>
    <property type="molecule type" value="Genomic_DNA"/>
</dbReference>
<dbReference type="RefSeq" id="WP_011410200.1">
    <property type="nucleotide sequence ID" value="NZ_LN854557.1"/>
</dbReference>
<dbReference type="SMR" id="Q2NW63"/>
<dbReference type="STRING" id="343509.SG0337"/>
<dbReference type="KEGG" id="sgl:SG0337"/>
<dbReference type="eggNOG" id="COG1923">
    <property type="taxonomic scope" value="Bacteria"/>
</dbReference>
<dbReference type="HOGENOM" id="CLU_113688_2_1_6"/>
<dbReference type="OrthoDB" id="9799751at2"/>
<dbReference type="Proteomes" id="UP000001932">
    <property type="component" value="Chromosome"/>
</dbReference>
<dbReference type="GO" id="GO:0005829">
    <property type="term" value="C:cytosol"/>
    <property type="evidence" value="ECO:0007669"/>
    <property type="project" value="TreeGrafter"/>
</dbReference>
<dbReference type="GO" id="GO:0003723">
    <property type="term" value="F:RNA binding"/>
    <property type="evidence" value="ECO:0007669"/>
    <property type="project" value="UniProtKB-UniRule"/>
</dbReference>
<dbReference type="GO" id="GO:0006355">
    <property type="term" value="P:regulation of DNA-templated transcription"/>
    <property type="evidence" value="ECO:0007669"/>
    <property type="project" value="InterPro"/>
</dbReference>
<dbReference type="GO" id="GO:0043487">
    <property type="term" value="P:regulation of RNA stability"/>
    <property type="evidence" value="ECO:0007669"/>
    <property type="project" value="TreeGrafter"/>
</dbReference>
<dbReference type="GO" id="GO:0045974">
    <property type="term" value="P:regulation of translation, ncRNA-mediated"/>
    <property type="evidence" value="ECO:0007669"/>
    <property type="project" value="TreeGrafter"/>
</dbReference>
<dbReference type="CDD" id="cd01716">
    <property type="entry name" value="Hfq"/>
    <property type="match status" value="1"/>
</dbReference>
<dbReference type="FunFam" id="2.30.30.100:FF:000001">
    <property type="entry name" value="RNA-binding protein Hfq"/>
    <property type="match status" value="1"/>
</dbReference>
<dbReference type="Gene3D" id="2.30.30.100">
    <property type="match status" value="1"/>
</dbReference>
<dbReference type="HAMAP" id="MF_00436">
    <property type="entry name" value="Hfq"/>
    <property type="match status" value="1"/>
</dbReference>
<dbReference type="InterPro" id="IPR005001">
    <property type="entry name" value="Hfq"/>
</dbReference>
<dbReference type="InterPro" id="IPR010920">
    <property type="entry name" value="LSM_dom_sf"/>
</dbReference>
<dbReference type="InterPro" id="IPR047575">
    <property type="entry name" value="Sm"/>
</dbReference>
<dbReference type="NCBIfam" id="TIGR02383">
    <property type="entry name" value="Hfq"/>
    <property type="match status" value="1"/>
</dbReference>
<dbReference type="NCBIfam" id="NF001602">
    <property type="entry name" value="PRK00395.1"/>
    <property type="match status" value="1"/>
</dbReference>
<dbReference type="PANTHER" id="PTHR34772">
    <property type="entry name" value="RNA-BINDING PROTEIN HFQ"/>
    <property type="match status" value="1"/>
</dbReference>
<dbReference type="PANTHER" id="PTHR34772:SF1">
    <property type="entry name" value="RNA-BINDING PROTEIN HFQ"/>
    <property type="match status" value="1"/>
</dbReference>
<dbReference type="Pfam" id="PF17209">
    <property type="entry name" value="Hfq"/>
    <property type="match status" value="1"/>
</dbReference>
<dbReference type="SUPFAM" id="SSF50182">
    <property type="entry name" value="Sm-like ribonucleoproteins"/>
    <property type="match status" value="1"/>
</dbReference>
<dbReference type="PROSITE" id="PS52002">
    <property type="entry name" value="SM"/>
    <property type="match status" value="1"/>
</dbReference>
<gene>
    <name evidence="1" type="primary">hfq</name>
    <name type="ordered locus">SG0337</name>
</gene>